<evidence type="ECO:0000250" key="1"/>
<evidence type="ECO:0000305" key="2"/>
<keyword id="KW-0010">Activator</keyword>
<keyword id="KW-0804">Transcription</keyword>
<keyword id="KW-0805">Transcription regulation</keyword>
<comment type="function">
    <text evidence="1">Acts with RNA polymerase to initiate transcription from intermediate gene promoters.</text>
</comment>
<comment type="subunit">
    <text evidence="1">Heterodimer of a 45 kDa and a 32 kDa subunit.</text>
</comment>
<comment type="similarity">
    <text evidence="2">Belongs to the poxviruses A23 family.</text>
</comment>
<organism>
    <name type="scientific">Vaccinia virus (strain Tian Tan)</name>
    <name type="common">VACV</name>
    <dbReference type="NCBI Taxonomy" id="10253"/>
    <lineage>
        <taxon>Viruses</taxon>
        <taxon>Varidnaviria</taxon>
        <taxon>Bamfordvirae</taxon>
        <taxon>Nucleocytoviricota</taxon>
        <taxon>Pokkesviricetes</taxon>
        <taxon>Chitovirales</taxon>
        <taxon>Poxviridae</taxon>
        <taxon>Chordopoxvirinae</taxon>
        <taxon>Orthopoxvirus</taxon>
        <taxon>Vaccinia virus</taxon>
    </lineage>
</organism>
<reference key="1">
    <citation type="submission" date="1998-09" db="EMBL/GenBank/DDBJ databases">
        <title>Complete genomic sequence of vaccinia virus (Tian Tan strain).</title>
        <authorList>
            <person name="Jin Q."/>
            <person name="Hou Y.D."/>
            <person name="Cheng N.H."/>
            <person name="Yao E.M."/>
            <person name="Cheng S.X."/>
            <person name="Yang X.K."/>
            <person name="Jing D.Y."/>
            <person name="Yu W.H."/>
            <person name="Yuan J.S."/>
            <person name="Ma X.J."/>
        </authorList>
    </citation>
    <scope>NUCLEOTIDE SEQUENCE [LARGE SCALE GENOMIC DNA]</scope>
</reference>
<accession>Q77TH8</accession>
<sequence>MDNLFTFLHEIEDRYARTIFNFHLISCDEIGDIYGLMKERISSEDMFDNIVYNKDIHHAIKKLVYCDIQLTKHIINQNTYPVFNDSSQVKCCHYFDINSDNSNISSRTVEIFEREKSSLVSYIKTTNKKRKVNYGEIKKTVHGGTNANYFSGKKSDEYLSTTVRSNINQPWIKTISKRMRVDIINHSIVTRGKSSILQTIEIIFTNRTCVKIFKDSTMHIILSKDKDEKGCIHMIDKLFYVYYNLFLLFEDIIQNEYFKEVANVVNHVLTATALDEKLFLIKKMAEHDVYGVSNFKIGMFNLTFIKSLDHTVFPSLLDEDSKIKFFKGKKLNIVALRSLEDCINYVTKSENMIEMMKERSTILNSIDIETESVDRLKELLLK</sequence>
<proteinExistence type="inferred from homology"/>
<name>VTF3L_VACCT</name>
<gene>
    <name type="primary">VITF3L</name>
    <name type="ORF">TA24R</name>
</gene>
<organismHost>
    <name type="scientific">Homo sapiens</name>
    <name type="common">Human</name>
    <dbReference type="NCBI Taxonomy" id="9606"/>
</organismHost>
<dbReference type="EMBL" id="AF095689">
    <property type="protein sequence ID" value="AAF34019.1"/>
    <property type="molecule type" value="Genomic_DNA"/>
</dbReference>
<dbReference type="SMR" id="Q77TH8"/>
<dbReference type="Proteomes" id="UP000163220">
    <property type="component" value="Genome"/>
</dbReference>
<dbReference type="InterPro" id="IPR008789">
    <property type="entry name" value="Poxvirus_intermed-TF"/>
</dbReference>
<dbReference type="Pfam" id="PF05718">
    <property type="entry name" value="Pox_int_trans"/>
    <property type="match status" value="1"/>
</dbReference>
<feature type="chain" id="PRO_0000099182" description="Intermediate transcription factor 3 large subunit">
    <location>
        <begin position="1"/>
        <end position="382"/>
    </location>
</feature>
<protein>
    <recommendedName>
        <fullName>Intermediate transcription factor 3 large subunit</fullName>
    </recommendedName>
    <alternativeName>
        <fullName>VITF-3 45 kDa subunit</fullName>
    </alternativeName>
</protein>